<proteinExistence type="evidence at transcript level"/>
<reference key="1">
    <citation type="journal article" date="2012" name="Peptides">
        <title>Identification and molecular characterization of three new K(+)-channel specific toxins from the Chinese scorpion Mesobuthus martensii Karsch revealing intronic number polymorphism and alternative splicing in duplicated genes.</title>
        <authorList>
            <person name="Zeng X.C."/>
            <person name="Zhang L."/>
            <person name="Nie Y."/>
            <person name="Luo X."/>
        </authorList>
    </citation>
    <scope>NUCLEOTIDE SEQUENCE [GENOMIC DNA / MRNA]</scope>
    <scope>NOMENCLATURE</scope>
    <source>
        <tissue>Venom gland</tissue>
    </source>
</reference>
<reference key="2">
    <citation type="submission" date="2002-07" db="EMBL/GenBank/DDBJ databases">
        <title>BmK38, a novel scorpion toxin active on potassium channel.</title>
        <authorList>
            <person name="Xu C.-Q."/>
            <person name="Brone B."/>
            <person name="Chi C.-W."/>
        </authorList>
    </citation>
    <scope>NUCLEOTIDE SEQUENCE [MRNA]</scope>
</reference>
<evidence type="ECO:0000250" key="1"/>
<evidence type="ECO:0000255" key="2"/>
<evidence type="ECO:0000305" key="3"/>
<dbReference type="EMBL" id="JQ023127">
    <property type="protein sequence ID" value="AEX92698.1"/>
    <property type="molecule type" value="Genomic_DNA"/>
</dbReference>
<dbReference type="EMBL" id="JQ074236">
    <property type="protein sequence ID" value="AEX92704.1"/>
    <property type="molecule type" value="mRNA"/>
</dbReference>
<dbReference type="EMBL" id="AF529081">
    <property type="protein sequence ID" value="AAM94410.1"/>
    <property type="molecule type" value="mRNA"/>
</dbReference>
<dbReference type="GO" id="GO:0005576">
    <property type="term" value="C:extracellular region"/>
    <property type="evidence" value="ECO:0007669"/>
    <property type="project" value="UniProtKB-SubCell"/>
</dbReference>
<dbReference type="GO" id="GO:0015459">
    <property type="term" value="F:potassium channel regulator activity"/>
    <property type="evidence" value="ECO:0007669"/>
    <property type="project" value="UniProtKB-KW"/>
</dbReference>
<dbReference type="GO" id="GO:0090729">
    <property type="term" value="F:toxin activity"/>
    <property type="evidence" value="ECO:0007669"/>
    <property type="project" value="UniProtKB-KW"/>
</dbReference>
<accession>Q8MUB1</accession>
<accession>H2ETQ9</accession>
<name>KA221_OLIMR</name>
<protein>
    <recommendedName>
        <fullName>Potassium channel toxin alpha-KTx 22.1</fullName>
    </recommendedName>
    <alternativeName>
        <fullName>Neurotoxin BmK38</fullName>
    </alternativeName>
    <alternativeName>
        <fullName>Toxin Kcugx</fullName>
    </alternativeName>
</protein>
<feature type="signal peptide" evidence="2">
    <location>
        <begin position="1"/>
        <end position="18"/>
    </location>
</feature>
<feature type="chain" id="PRO_0000227818" description="Potassium channel toxin alpha-KTx 22.1">
    <location>
        <begin position="19"/>
        <end position="62"/>
    </location>
</feature>
<feature type="site" description="Basic residue of the functional dyad" evidence="1">
    <location>
        <position position="45"/>
    </location>
</feature>
<feature type="site" description="Aromatic residue of the functional dyad" evidence="1">
    <location>
        <position position="62"/>
    </location>
</feature>
<feature type="disulfide bond" evidence="2">
    <location>
        <begin position="28"/>
        <end position="46"/>
    </location>
</feature>
<feature type="disulfide bond" evidence="2">
    <location>
        <begin position="33"/>
        <end position="59"/>
    </location>
</feature>
<feature type="disulfide bond" evidence="2">
    <location>
        <begin position="37"/>
        <end position="61"/>
    </location>
</feature>
<feature type="sequence conflict" description="In Ref. 2; AAM94410." evidence="3" ref="2">
    <original>R</original>
    <variation>K</variation>
    <location>
        <position position="23"/>
    </location>
</feature>
<feature type="sequence conflict" description="In Ref. 2; AAM94410." evidence="3" ref="2">
    <original>E</original>
    <variation>Q</variation>
    <location>
        <position position="34"/>
    </location>
</feature>
<comment type="function">
    <text>May block potassium channels.</text>
</comment>
<comment type="subcellular location">
    <subcellularLocation>
        <location evidence="1">Secreted</location>
    </subcellularLocation>
</comment>
<comment type="tissue specificity">
    <text>Expressed by the venom gland.</text>
</comment>
<comment type="domain">
    <text evidence="3">Has the structural arrangement of an alpha-helix connected to antiparallel beta-sheets by disulfide bonds (CS-alpha/beta).</text>
</comment>
<comment type="similarity">
    <text evidence="3">Belongs to the short scorpion toxin superfamily. Potassium channel inhibitor family. Alpha-KTx 22 subfamily.</text>
</comment>
<organism>
    <name type="scientific">Olivierus martensii</name>
    <name type="common">Manchurian scorpion</name>
    <name type="synonym">Mesobuthus martensii</name>
    <dbReference type="NCBI Taxonomy" id="34649"/>
    <lineage>
        <taxon>Eukaryota</taxon>
        <taxon>Metazoa</taxon>
        <taxon>Ecdysozoa</taxon>
        <taxon>Arthropoda</taxon>
        <taxon>Chelicerata</taxon>
        <taxon>Arachnida</taxon>
        <taxon>Scorpiones</taxon>
        <taxon>Buthida</taxon>
        <taxon>Buthoidea</taxon>
        <taxon>Buthidae</taxon>
        <taxon>Olivierus</taxon>
    </lineage>
</organism>
<sequence>MQKLFIVFVLFCILRLDAEVDGRTATFCTQSICEESCKRQNKNGRCVIEAEGSLIYHLCKCY</sequence>
<keyword id="KW-1015">Disulfide bond</keyword>
<keyword id="KW-0872">Ion channel impairing toxin</keyword>
<keyword id="KW-0528">Neurotoxin</keyword>
<keyword id="KW-0632">Potassium channel impairing toxin</keyword>
<keyword id="KW-0964">Secreted</keyword>
<keyword id="KW-0732">Signal</keyword>
<keyword id="KW-0800">Toxin</keyword>